<organism>
    <name type="scientific">Daboia russelii</name>
    <name type="common">Russel's viper</name>
    <name type="synonym">Vipera russelii</name>
    <dbReference type="NCBI Taxonomy" id="8707"/>
    <lineage>
        <taxon>Eukaryota</taxon>
        <taxon>Metazoa</taxon>
        <taxon>Chordata</taxon>
        <taxon>Craniata</taxon>
        <taxon>Vertebrata</taxon>
        <taxon>Euteleostomi</taxon>
        <taxon>Lepidosauria</taxon>
        <taxon>Squamata</taxon>
        <taxon>Bifurcata</taxon>
        <taxon>Unidentata</taxon>
        <taxon>Episquamata</taxon>
        <taxon>Toxicofera</taxon>
        <taxon>Serpentes</taxon>
        <taxon>Colubroidea</taxon>
        <taxon>Viperidae</taxon>
        <taxon>Viperinae</taxon>
        <taxon>Daboia</taxon>
    </lineage>
</organism>
<evidence type="ECO:0000250" key="1"/>
<evidence type="ECO:0000255" key="2">
    <source>
        <dbReference type="PROSITE-ProRule" id="PRU10035"/>
    </source>
</evidence>
<evidence type="ECO:0000255" key="3">
    <source>
        <dbReference type="PROSITE-ProRule" id="PRU10036"/>
    </source>
</evidence>
<evidence type="ECO:0000305" key="4"/>
<evidence type="ECO:0000305" key="5">
    <source>
    </source>
</evidence>
<protein>
    <recommendedName>
        <fullName>Acidic phospholipase A2 Drk-a2</fullName>
        <shortName>svPLA2</shortName>
        <ecNumber>3.1.1.4</ecNumber>
    </recommendedName>
    <alternativeName>
        <fullName>Phosphatidylcholine 2-acylhydrolase</fullName>
    </alternativeName>
</protein>
<dbReference type="EC" id="3.1.1.4"/>
<dbReference type="EMBL" id="DQ090659">
    <property type="protein sequence ID" value="AAZ53181.1"/>
    <property type="molecule type" value="mRNA"/>
</dbReference>
<dbReference type="SMR" id="A8CG87"/>
<dbReference type="GO" id="GO:0005576">
    <property type="term" value="C:extracellular region"/>
    <property type="evidence" value="ECO:0007669"/>
    <property type="project" value="UniProtKB-SubCell"/>
</dbReference>
<dbReference type="GO" id="GO:0005509">
    <property type="term" value="F:calcium ion binding"/>
    <property type="evidence" value="ECO:0007669"/>
    <property type="project" value="InterPro"/>
</dbReference>
<dbReference type="GO" id="GO:0047498">
    <property type="term" value="F:calcium-dependent phospholipase A2 activity"/>
    <property type="evidence" value="ECO:0007669"/>
    <property type="project" value="TreeGrafter"/>
</dbReference>
<dbReference type="GO" id="GO:0005543">
    <property type="term" value="F:phospholipid binding"/>
    <property type="evidence" value="ECO:0007669"/>
    <property type="project" value="TreeGrafter"/>
</dbReference>
<dbReference type="GO" id="GO:0090729">
    <property type="term" value="F:toxin activity"/>
    <property type="evidence" value="ECO:0007669"/>
    <property type="project" value="UniProtKB-KW"/>
</dbReference>
<dbReference type="GO" id="GO:0050482">
    <property type="term" value="P:arachidonate secretion"/>
    <property type="evidence" value="ECO:0007669"/>
    <property type="project" value="InterPro"/>
</dbReference>
<dbReference type="GO" id="GO:0016042">
    <property type="term" value="P:lipid catabolic process"/>
    <property type="evidence" value="ECO:0007669"/>
    <property type="project" value="UniProtKB-KW"/>
</dbReference>
<dbReference type="GO" id="GO:0042130">
    <property type="term" value="P:negative regulation of T cell proliferation"/>
    <property type="evidence" value="ECO:0007669"/>
    <property type="project" value="TreeGrafter"/>
</dbReference>
<dbReference type="GO" id="GO:0006644">
    <property type="term" value="P:phospholipid metabolic process"/>
    <property type="evidence" value="ECO:0007669"/>
    <property type="project" value="InterPro"/>
</dbReference>
<dbReference type="CDD" id="cd00125">
    <property type="entry name" value="PLA2c"/>
    <property type="match status" value="1"/>
</dbReference>
<dbReference type="FunFam" id="1.20.90.10:FF:000001">
    <property type="entry name" value="Basic phospholipase A2 homolog"/>
    <property type="match status" value="1"/>
</dbReference>
<dbReference type="Gene3D" id="1.20.90.10">
    <property type="entry name" value="Phospholipase A2 domain"/>
    <property type="match status" value="1"/>
</dbReference>
<dbReference type="InterPro" id="IPR001211">
    <property type="entry name" value="PLipase_A2"/>
</dbReference>
<dbReference type="InterPro" id="IPR033112">
    <property type="entry name" value="PLipase_A2_Asp_AS"/>
</dbReference>
<dbReference type="InterPro" id="IPR016090">
    <property type="entry name" value="PLipase_A2_dom"/>
</dbReference>
<dbReference type="InterPro" id="IPR036444">
    <property type="entry name" value="PLipase_A2_dom_sf"/>
</dbReference>
<dbReference type="InterPro" id="IPR033113">
    <property type="entry name" value="PLipase_A2_His_AS"/>
</dbReference>
<dbReference type="PANTHER" id="PTHR11716">
    <property type="entry name" value="PHOSPHOLIPASE A2 FAMILY MEMBER"/>
    <property type="match status" value="1"/>
</dbReference>
<dbReference type="PANTHER" id="PTHR11716:SF9">
    <property type="entry name" value="PHOSPHOLIPASE A2, MEMBRANE ASSOCIATED"/>
    <property type="match status" value="1"/>
</dbReference>
<dbReference type="Pfam" id="PF00068">
    <property type="entry name" value="Phospholip_A2_1"/>
    <property type="match status" value="1"/>
</dbReference>
<dbReference type="PRINTS" id="PR00389">
    <property type="entry name" value="PHPHLIPASEA2"/>
</dbReference>
<dbReference type="SMART" id="SM00085">
    <property type="entry name" value="PA2c"/>
    <property type="match status" value="1"/>
</dbReference>
<dbReference type="SUPFAM" id="SSF48619">
    <property type="entry name" value="Phospholipase A2, PLA2"/>
    <property type="match status" value="1"/>
</dbReference>
<dbReference type="PROSITE" id="PS00119">
    <property type="entry name" value="PA2_ASP"/>
    <property type="match status" value="1"/>
</dbReference>
<dbReference type="PROSITE" id="PS00118">
    <property type="entry name" value="PA2_HIS"/>
    <property type="match status" value="1"/>
</dbReference>
<accession>A8CG87</accession>
<comment type="function">
    <text evidence="1">Snake venom phospholipase A2 (PLA2) that is neurotoxic. PLA2 catalyzes the calcium-dependent hydrolysis of the 2-acyl groups in 3-sn-phosphoglycerides (By similarity).</text>
</comment>
<comment type="catalytic activity">
    <reaction evidence="2 3">
        <text>a 1,2-diacyl-sn-glycero-3-phosphocholine + H2O = a 1-acyl-sn-glycero-3-phosphocholine + a fatty acid + H(+)</text>
        <dbReference type="Rhea" id="RHEA:15801"/>
        <dbReference type="ChEBI" id="CHEBI:15377"/>
        <dbReference type="ChEBI" id="CHEBI:15378"/>
        <dbReference type="ChEBI" id="CHEBI:28868"/>
        <dbReference type="ChEBI" id="CHEBI:57643"/>
        <dbReference type="ChEBI" id="CHEBI:58168"/>
        <dbReference type="EC" id="3.1.1.4"/>
    </reaction>
</comment>
<comment type="cofactor">
    <cofactor evidence="1">
        <name>Ca(2+)</name>
        <dbReference type="ChEBI" id="CHEBI:29108"/>
    </cofactor>
    <text evidence="1">Binds 1 Ca(2+) ion.</text>
</comment>
<comment type="subcellular location">
    <subcellularLocation>
        <location evidence="1">Secreted</location>
    </subcellularLocation>
</comment>
<comment type="tissue specificity">
    <text>Expressed by the venom gland.</text>
</comment>
<comment type="similarity">
    <text evidence="4">Belongs to the phospholipase A2 family. Group II subfamily. D49 sub-subfamily.</text>
</comment>
<comment type="caution">
    <text evidence="5">This protein is not found in the crude venom.</text>
</comment>
<reference key="1">
    <citation type="journal article" date="2007" name="Biochim. Biophys. Acta">
        <title>Venom phospholipases of Russell's vipers from Myanmar and eastern India--cloning, characterization and phylogeographic analysis.</title>
        <authorList>
            <person name="Tsai I.-H."/>
            <person name="Tsai H.-Y."/>
            <person name="Wang Y.-M."/>
            <person name="Pe T."/>
            <person name="Warrell D.-A."/>
        </authorList>
    </citation>
    <scope>NUCLEOTIDE SEQUENCE [MRNA]</scope>
    <source>
        <strain>Kolkata</strain>
        <tissue>Venom gland</tissue>
    </source>
</reference>
<proteinExistence type="evidence at transcript level"/>
<sequence length="138" mass="15586">MRTLWIVAVCLIGVEGNLYQFGEMINQKTGNFGLLSYVYYGCYCGWGGKGKPQDATDRCCFVHDCCYGRVKGCDPKTATYSYSFENGDIVCGGDDPCLRAVCECDRVAAICFRENMNTYDKKYMLYSIFDCKEESDQC</sequence>
<name>PA2A2_DABRR</name>
<feature type="signal peptide" evidence="1">
    <location>
        <begin position="1"/>
        <end position="16"/>
    </location>
</feature>
<feature type="chain" id="PRO_0000419216" description="Acidic phospholipase A2 Drk-a2">
    <location>
        <begin position="17"/>
        <end position="138"/>
    </location>
</feature>
<feature type="active site" evidence="1">
    <location>
        <position position="63"/>
    </location>
</feature>
<feature type="active site" evidence="1">
    <location>
        <position position="105"/>
    </location>
</feature>
<feature type="binding site" evidence="1">
    <location>
        <position position="43"/>
    </location>
    <ligand>
        <name>Ca(2+)</name>
        <dbReference type="ChEBI" id="CHEBI:29108"/>
    </ligand>
</feature>
<feature type="binding site" evidence="1">
    <location>
        <position position="45"/>
    </location>
    <ligand>
        <name>Ca(2+)</name>
        <dbReference type="ChEBI" id="CHEBI:29108"/>
    </ligand>
</feature>
<feature type="binding site" evidence="1">
    <location>
        <position position="47"/>
    </location>
    <ligand>
        <name>Ca(2+)</name>
        <dbReference type="ChEBI" id="CHEBI:29108"/>
    </ligand>
</feature>
<feature type="binding site" evidence="1">
    <location>
        <position position="64"/>
    </location>
    <ligand>
        <name>Ca(2+)</name>
        <dbReference type="ChEBI" id="CHEBI:29108"/>
    </ligand>
</feature>
<feature type="disulfide bond" evidence="1">
    <location>
        <begin position="42"/>
        <end position="131"/>
    </location>
</feature>
<feature type="disulfide bond" evidence="1">
    <location>
        <begin position="44"/>
        <end position="60"/>
    </location>
</feature>
<feature type="disulfide bond" evidence="1">
    <location>
        <begin position="59"/>
        <end position="111"/>
    </location>
</feature>
<feature type="disulfide bond" evidence="1">
    <location>
        <begin position="65"/>
        <end position="138"/>
    </location>
</feature>
<feature type="disulfide bond" evidence="1">
    <location>
        <begin position="66"/>
        <end position="104"/>
    </location>
</feature>
<feature type="disulfide bond" evidence="1">
    <location>
        <begin position="73"/>
        <end position="97"/>
    </location>
</feature>
<feature type="disulfide bond" evidence="1">
    <location>
        <begin position="91"/>
        <end position="102"/>
    </location>
</feature>
<keyword id="KW-1015">Disulfide bond</keyword>
<keyword id="KW-0378">Hydrolase</keyword>
<keyword id="KW-0442">Lipid degradation</keyword>
<keyword id="KW-0443">Lipid metabolism</keyword>
<keyword id="KW-0479">Metal-binding</keyword>
<keyword id="KW-0528">Neurotoxin</keyword>
<keyword id="KW-0964">Secreted</keyword>
<keyword id="KW-0732">Signal</keyword>
<keyword id="KW-0800">Toxin</keyword>